<evidence type="ECO:0000255" key="1">
    <source>
        <dbReference type="HAMAP-Rule" id="MF_00456"/>
    </source>
</evidence>
<sequence length="371" mass="38449">MRPFVTDARRVVVKVGSSSLTTAAGGLDVDRLEALVAAVLPRAGQQLVLVSSGAIAAGLAPLGLARRPRDLATQQAAASVGQSSLVHSYAAAFGRAGHQVGQVLLTATDVIRRTHYRNARTALDRLLELDVIPIINENDAVATQEIRVGDNDRLAAIVAHLVSADLLVLLSDVDGLYDANPRLGPATMVREVRSDTDLDGLTARGTGTAGVGVGGMATKIEAARMAASGGVTAIITSAANAAPVLRGEEVGTVFHPTGSRRASRLLWLAHATAPEGRLHLDSGAVAAVVRRRASLLPAGITGVEGDFAAGDPVDLVDPDGRSVARGLVAFDAAELPVMLGRSTADLAMELGPSYEREIVHRDDLVLLLPAR</sequence>
<protein>
    <recommendedName>
        <fullName evidence="1">Glutamate 5-kinase</fullName>
        <ecNumber evidence="1">2.7.2.11</ecNumber>
    </recommendedName>
    <alternativeName>
        <fullName evidence="1">Gamma-glutamyl kinase</fullName>
        <shortName evidence="1">GK</shortName>
    </alternativeName>
</protein>
<organism>
    <name type="scientific">Frankia casuarinae (strain DSM 45818 / CECT 9043 / HFP020203 / CcI3)</name>
    <dbReference type="NCBI Taxonomy" id="106370"/>
    <lineage>
        <taxon>Bacteria</taxon>
        <taxon>Bacillati</taxon>
        <taxon>Actinomycetota</taxon>
        <taxon>Actinomycetes</taxon>
        <taxon>Frankiales</taxon>
        <taxon>Frankiaceae</taxon>
        <taxon>Frankia</taxon>
    </lineage>
</organism>
<feature type="chain" id="PRO_0000252980" description="Glutamate 5-kinase">
    <location>
        <begin position="1"/>
        <end position="371"/>
    </location>
</feature>
<feature type="domain" description="PUA" evidence="1">
    <location>
        <begin position="275"/>
        <end position="353"/>
    </location>
</feature>
<feature type="binding site" evidence="1">
    <location>
        <position position="14"/>
    </location>
    <ligand>
        <name>ATP</name>
        <dbReference type="ChEBI" id="CHEBI:30616"/>
    </ligand>
</feature>
<feature type="binding site" evidence="1">
    <location>
        <position position="52"/>
    </location>
    <ligand>
        <name>substrate</name>
    </ligand>
</feature>
<feature type="binding site" evidence="1">
    <location>
        <position position="139"/>
    </location>
    <ligand>
        <name>substrate</name>
    </ligand>
</feature>
<feature type="binding site" evidence="1">
    <location>
        <position position="151"/>
    </location>
    <ligand>
        <name>substrate</name>
    </ligand>
</feature>
<feature type="binding site" evidence="1">
    <location>
        <begin position="171"/>
        <end position="172"/>
    </location>
    <ligand>
        <name>ATP</name>
        <dbReference type="ChEBI" id="CHEBI:30616"/>
    </ligand>
</feature>
<dbReference type="EC" id="2.7.2.11" evidence="1"/>
<dbReference type="EMBL" id="CP000249">
    <property type="protein sequence ID" value="ABD10601.1"/>
    <property type="molecule type" value="Genomic_DNA"/>
</dbReference>
<dbReference type="RefSeq" id="WP_011435667.1">
    <property type="nucleotide sequence ID" value="NZ_JENI01000006.1"/>
</dbReference>
<dbReference type="SMR" id="Q2JDP1"/>
<dbReference type="STRING" id="106370.Francci3_1223"/>
<dbReference type="KEGG" id="fra:Francci3_1223"/>
<dbReference type="eggNOG" id="COG0263">
    <property type="taxonomic scope" value="Bacteria"/>
</dbReference>
<dbReference type="HOGENOM" id="CLU_025400_2_0_11"/>
<dbReference type="OrthoDB" id="9804434at2"/>
<dbReference type="PhylomeDB" id="Q2JDP1"/>
<dbReference type="UniPathway" id="UPA00098">
    <property type="reaction ID" value="UER00359"/>
</dbReference>
<dbReference type="Proteomes" id="UP000001937">
    <property type="component" value="Chromosome"/>
</dbReference>
<dbReference type="GO" id="GO:0005829">
    <property type="term" value="C:cytosol"/>
    <property type="evidence" value="ECO:0007669"/>
    <property type="project" value="TreeGrafter"/>
</dbReference>
<dbReference type="GO" id="GO:0005524">
    <property type="term" value="F:ATP binding"/>
    <property type="evidence" value="ECO:0007669"/>
    <property type="project" value="UniProtKB-KW"/>
</dbReference>
<dbReference type="GO" id="GO:0004349">
    <property type="term" value="F:glutamate 5-kinase activity"/>
    <property type="evidence" value="ECO:0007669"/>
    <property type="project" value="UniProtKB-UniRule"/>
</dbReference>
<dbReference type="GO" id="GO:0003723">
    <property type="term" value="F:RNA binding"/>
    <property type="evidence" value="ECO:0007669"/>
    <property type="project" value="InterPro"/>
</dbReference>
<dbReference type="GO" id="GO:0055129">
    <property type="term" value="P:L-proline biosynthetic process"/>
    <property type="evidence" value="ECO:0007669"/>
    <property type="project" value="UniProtKB-UniRule"/>
</dbReference>
<dbReference type="CDD" id="cd04242">
    <property type="entry name" value="AAK_G5K_ProB"/>
    <property type="match status" value="1"/>
</dbReference>
<dbReference type="CDD" id="cd21157">
    <property type="entry name" value="PUA_G5K"/>
    <property type="match status" value="1"/>
</dbReference>
<dbReference type="FunFam" id="3.40.1160.10:FF:000018">
    <property type="entry name" value="Glutamate 5-kinase"/>
    <property type="match status" value="1"/>
</dbReference>
<dbReference type="Gene3D" id="3.40.1160.10">
    <property type="entry name" value="Acetylglutamate kinase-like"/>
    <property type="match status" value="2"/>
</dbReference>
<dbReference type="Gene3D" id="2.30.130.10">
    <property type="entry name" value="PUA domain"/>
    <property type="match status" value="1"/>
</dbReference>
<dbReference type="HAMAP" id="MF_00456">
    <property type="entry name" value="ProB"/>
    <property type="match status" value="1"/>
</dbReference>
<dbReference type="InterPro" id="IPR036393">
    <property type="entry name" value="AceGlu_kinase-like_sf"/>
</dbReference>
<dbReference type="InterPro" id="IPR001048">
    <property type="entry name" value="Asp/Glu/Uridylate_kinase"/>
</dbReference>
<dbReference type="InterPro" id="IPR041739">
    <property type="entry name" value="G5K_ProB"/>
</dbReference>
<dbReference type="InterPro" id="IPR001057">
    <property type="entry name" value="Glu/AcGlu_kinase"/>
</dbReference>
<dbReference type="InterPro" id="IPR011529">
    <property type="entry name" value="Glu_5kinase"/>
</dbReference>
<dbReference type="InterPro" id="IPR005715">
    <property type="entry name" value="Glu_5kinase/COase_Synthase"/>
</dbReference>
<dbReference type="InterPro" id="IPR019797">
    <property type="entry name" value="Glutamate_5-kinase_CS"/>
</dbReference>
<dbReference type="InterPro" id="IPR002478">
    <property type="entry name" value="PUA"/>
</dbReference>
<dbReference type="InterPro" id="IPR015947">
    <property type="entry name" value="PUA-like_sf"/>
</dbReference>
<dbReference type="InterPro" id="IPR036974">
    <property type="entry name" value="PUA_sf"/>
</dbReference>
<dbReference type="NCBIfam" id="TIGR01027">
    <property type="entry name" value="proB"/>
    <property type="match status" value="1"/>
</dbReference>
<dbReference type="PANTHER" id="PTHR43654">
    <property type="entry name" value="GLUTAMATE 5-KINASE"/>
    <property type="match status" value="1"/>
</dbReference>
<dbReference type="PANTHER" id="PTHR43654:SF1">
    <property type="entry name" value="ISOPENTENYL PHOSPHATE KINASE"/>
    <property type="match status" value="1"/>
</dbReference>
<dbReference type="Pfam" id="PF00696">
    <property type="entry name" value="AA_kinase"/>
    <property type="match status" value="1"/>
</dbReference>
<dbReference type="Pfam" id="PF01472">
    <property type="entry name" value="PUA"/>
    <property type="match status" value="1"/>
</dbReference>
<dbReference type="PIRSF" id="PIRSF000729">
    <property type="entry name" value="GK"/>
    <property type="match status" value="1"/>
</dbReference>
<dbReference type="PRINTS" id="PR00474">
    <property type="entry name" value="GLU5KINASE"/>
</dbReference>
<dbReference type="SMART" id="SM00359">
    <property type="entry name" value="PUA"/>
    <property type="match status" value="1"/>
</dbReference>
<dbReference type="SUPFAM" id="SSF53633">
    <property type="entry name" value="Carbamate kinase-like"/>
    <property type="match status" value="1"/>
</dbReference>
<dbReference type="SUPFAM" id="SSF88697">
    <property type="entry name" value="PUA domain-like"/>
    <property type="match status" value="1"/>
</dbReference>
<dbReference type="PROSITE" id="PS00902">
    <property type="entry name" value="GLUTAMATE_5_KINASE"/>
    <property type="match status" value="1"/>
</dbReference>
<dbReference type="PROSITE" id="PS50890">
    <property type="entry name" value="PUA"/>
    <property type="match status" value="1"/>
</dbReference>
<name>PROB_FRACC</name>
<accession>Q2JDP1</accession>
<keyword id="KW-0028">Amino-acid biosynthesis</keyword>
<keyword id="KW-0067">ATP-binding</keyword>
<keyword id="KW-0963">Cytoplasm</keyword>
<keyword id="KW-0418">Kinase</keyword>
<keyword id="KW-0547">Nucleotide-binding</keyword>
<keyword id="KW-0641">Proline biosynthesis</keyword>
<keyword id="KW-1185">Reference proteome</keyword>
<keyword id="KW-0808">Transferase</keyword>
<reference key="1">
    <citation type="journal article" date="2007" name="Genome Res.">
        <title>Genome characteristics of facultatively symbiotic Frankia sp. strains reflect host range and host plant biogeography.</title>
        <authorList>
            <person name="Normand P."/>
            <person name="Lapierre P."/>
            <person name="Tisa L.S."/>
            <person name="Gogarten J.P."/>
            <person name="Alloisio N."/>
            <person name="Bagnarol E."/>
            <person name="Bassi C.A."/>
            <person name="Berry A.M."/>
            <person name="Bickhart D.M."/>
            <person name="Choisne N."/>
            <person name="Couloux A."/>
            <person name="Cournoyer B."/>
            <person name="Cruveiller S."/>
            <person name="Daubin V."/>
            <person name="Demange N."/>
            <person name="Francino M.P."/>
            <person name="Goltsman E."/>
            <person name="Huang Y."/>
            <person name="Kopp O.R."/>
            <person name="Labarre L."/>
            <person name="Lapidus A."/>
            <person name="Lavire C."/>
            <person name="Marechal J."/>
            <person name="Martinez M."/>
            <person name="Mastronunzio J.E."/>
            <person name="Mullin B.C."/>
            <person name="Niemann J."/>
            <person name="Pujic P."/>
            <person name="Rawnsley T."/>
            <person name="Rouy Z."/>
            <person name="Schenowitz C."/>
            <person name="Sellstedt A."/>
            <person name="Tavares F."/>
            <person name="Tomkins J.P."/>
            <person name="Vallenet D."/>
            <person name="Valverde C."/>
            <person name="Wall L.G."/>
            <person name="Wang Y."/>
            <person name="Medigue C."/>
            <person name="Benson D.R."/>
        </authorList>
    </citation>
    <scope>NUCLEOTIDE SEQUENCE [LARGE SCALE GENOMIC DNA]</scope>
    <source>
        <strain>DSM 45818 / CECT 9043 / HFP020203 / CcI3</strain>
    </source>
</reference>
<proteinExistence type="inferred from homology"/>
<gene>
    <name evidence="1" type="primary">proB</name>
    <name type="ordered locus">Francci3_1223</name>
</gene>
<comment type="function">
    <text evidence="1">Catalyzes the transfer of a phosphate group to glutamate to form L-glutamate 5-phosphate.</text>
</comment>
<comment type="catalytic activity">
    <reaction evidence="1">
        <text>L-glutamate + ATP = L-glutamyl 5-phosphate + ADP</text>
        <dbReference type="Rhea" id="RHEA:14877"/>
        <dbReference type="ChEBI" id="CHEBI:29985"/>
        <dbReference type="ChEBI" id="CHEBI:30616"/>
        <dbReference type="ChEBI" id="CHEBI:58274"/>
        <dbReference type="ChEBI" id="CHEBI:456216"/>
        <dbReference type="EC" id="2.7.2.11"/>
    </reaction>
</comment>
<comment type="pathway">
    <text evidence="1">Amino-acid biosynthesis; L-proline biosynthesis; L-glutamate 5-semialdehyde from L-glutamate: step 1/2.</text>
</comment>
<comment type="subcellular location">
    <subcellularLocation>
        <location evidence="1">Cytoplasm</location>
    </subcellularLocation>
</comment>
<comment type="similarity">
    <text evidence="1">Belongs to the glutamate 5-kinase family.</text>
</comment>